<evidence type="ECO:0000255" key="1">
    <source>
        <dbReference type="HAMAP-Rule" id="MF_00720"/>
    </source>
</evidence>
<feature type="chain" id="PRO_1000083300" description="Replication restart protein PriB">
    <location>
        <begin position="1"/>
        <end position="104"/>
    </location>
</feature>
<feature type="domain" description="SSB" evidence="1">
    <location>
        <begin position="1"/>
        <end position="101"/>
    </location>
</feature>
<dbReference type="EMBL" id="CP000034">
    <property type="protein sequence ID" value="ABB64257.1"/>
    <property type="molecule type" value="Genomic_DNA"/>
</dbReference>
<dbReference type="RefSeq" id="WP_011378947.1">
    <property type="nucleotide sequence ID" value="NC_007606.1"/>
</dbReference>
<dbReference type="RefSeq" id="YP_405748.1">
    <property type="nucleotide sequence ID" value="NC_007606.1"/>
</dbReference>
<dbReference type="SMR" id="Q328J8"/>
<dbReference type="STRING" id="300267.SDY_4370"/>
<dbReference type="EnsemblBacteria" id="ABB64257">
    <property type="protein sequence ID" value="ABB64257"/>
    <property type="gene ID" value="SDY_4370"/>
</dbReference>
<dbReference type="KEGG" id="sdy:SDY_4370"/>
<dbReference type="PATRIC" id="fig|300267.13.peg.5159"/>
<dbReference type="HOGENOM" id="CLU_166075_0_0_6"/>
<dbReference type="Proteomes" id="UP000002716">
    <property type="component" value="Chromosome"/>
</dbReference>
<dbReference type="GO" id="GO:1990077">
    <property type="term" value="C:primosome complex"/>
    <property type="evidence" value="ECO:0007669"/>
    <property type="project" value="UniProtKB-KW"/>
</dbReference>
<dbReference type="GO" id="GO:0003697">
    <property type="term" value="F:single-stranded DNA binding"/>
    <property type="evidence" value="ECO:0007669"/>
    <property type="project" value="UniProtKB-UniRule"/>
</dbReference>
<dbReference type="GO" id="GO:0006269">
    <property type="term" value="P:DNA replication, synthesis of primer"/>
    <property type="evidence" value="ECO:0007669"/>
    <property type="project" value="UniProtKB-KW"/>
</dbReference>
<dbReference type="FunFam" id="2.40.50.140:FF:000077">
    <property type="entry name" value="Primosomal replication protein N"/>
    <property type="match status" value="1"/>
</dbReference>
<dbReference type="Gene3D" id="2.40.50.140">
    <property type="entry name" value="Nucleic acid-binding proteins"/>
    <property type="match status" value="1"/>
</dbReference>
<dbReference type="HAMAP" id="MF_00720">
    <property type="entry name" value="PriB"/>
    <property type="match status" value="1"/>
</dbReference>
<dbReference type="InterPro" id="IPR012340">
    <property type="entry name" value="NA-bd_OB-fold"/>
</dbReference>
<dbReference type="InterPro" id="IPR000424">
    <property type="entry name" value="Primosome_PriB/ssb"/>
</dbReference>
<dbReference type="InterPro" id="IPR023646">
    <property type="entry name" value="Prisomal_replication_PriB"/>
</dbReference>
<dbReference type="NCBIfam" id="TIGR04418">
    <property type="entry name" value="PriB_gamma"/>
    <property type="match status" value="1"/>
</dbReference>
<dbReference type="Pfam" id="PF22657">
    <property type="entry name" value="SSB_1"/>
    <property type="match status" value="1"/>
</dbReference>
<dbReference type="PIRSF" id="PIRSF003135">
    <property type="entry name" value="Primosomal_n"/>
    <property type="match status" value="1"/>
</dbReference>
<dbReference type="SUPFAM" id="SSF50249">
    <property type="entry name" value="Nucleic acid-binding proteins"/>
    <property type="match status" value="1"/>
</dbReference>
<dbReference type="PROSITE" id="PS50935">
    <property type="entry name" value="SSB"/>
    <property type="match status" value="1"/>
</dbReference>
<keyword id="KW-0235">DNA replication</keyword>
<keyword id="KW-0238">DNA-binding</keyword>
<keyword id="KW-0639">Primosome</keyword>
<keyword id="KW-1185">Reference proteome</keyword>
<gene>
    <name evidence="1" type="primary">priB</name>
    <name type="ordered locus">SDY_4370</name>
</gene>
<sequence length="104" mass="11429">MTNRLVLSGTVCRTPLRKVSPSGIPHCQFVLEHRSVQEEAGFHRQAWCQMPVIVSGHENQAITHSITVGSSITVQGFISCYKAKNGLSKMVLHAEQIELIDSGD</sequence>
<comment type="function">
    <text evidence="1">Involved in the restart of stalled replication forks, which reloads the replicative helicase on sites other than the origin of replication; the PriA-PriB pathway is the major replication restart pathway. During primosome assembly it facilitates complex formation between PriA and DnaT on DNA; stabilizes PriA on DNA. Stimulates the DNA unwinding activity of PriA helicase.</text>
</comment>
<comment type="subunit">
    <text evidence="1">Homodimer. Interacts with PriA and DnaT. Component of the replication restart primosome. Primosome assembly occurs via a 'hand-off' mechanism. PriA binds to replication forks, subsequently PriB then DnaT bind; DnaT then displaces ssDNA to generate the helicase loading substrate.</text>
</comment>
<comment type="similarity">
    <text evidence="1">Belongs to the PriB family.</text>
</comment>
<accession>Q328J8</accession>
<reference key="1">
    <citation type="journal article" date="2005" name="Nucleic Acids Res.">
        <title>Genome dynamics and diversity of Shigella species, the etiologic agents of bacillary dysentery.</title>
        <authorList>
            <person name="Yang F."/>
            <person name="Yang J."/>
            <person name="Zhang X."/>
            <person name="Chen L."/>
            <person name="Jiang Y."/>
            <person name="Yan Y."/>
            <person name="Tang X."/>
            <person name="Wang J."/>
            <person name="Xiong Z."/>
            <person name="Dong J."/>
            <person name="Xue Y."/>
            <person name="Zhu Y."/>
            <person name="Xu X."/>
            <person name="Sun L."/>
            <person name="Chen S."/>
            <person name="Nie H."/>
            <person name="Peng J."/>
            <person name="Xu J."/>
            <person name="Wang Y."/>
            <person name="Yuan Z."/>
            <person name="Wen Y."/>
            <person name="Yao Z."/>
            <person name="Shen Y."/>
            <person name="Qiang B."/>
            <person name="Hou Y."/>
            <person name="Yu J."/>
            <person name="Jin Q."/>
        </authorList>
    </citation>
    <scope>NUCLEOTIDE SEQUENCE [LARGE SCALE GENOMIC DNA]</scope>
    <source>
        <strain>Sd197</strain>
    </source>
</reference>
<organism>
    <name type="scientific">Shigella dysenteriae serotype 1 (strain Sd197)</name>
    <dbReference type="NCBI Taxonomy" id="300267"/>
    <lineage>
        <taxon>Bacteria</taxon>
        <taxon>Pseudomonadati</taxon>
        <taxon>Pseudomonadota</taxon>
        <taxon>Gammaproteobacteria</taxon>
        <taxon>Enterobacterales</taxon>
        <taxon>Enterobacteriaceae</taxon>
        <taxon>Shigella</taxon>
    </lineage>
</organism>
<proteinExistence type="inferred from homology"/>
<name>PRIB_SHIDS</name>
<protein>
    <recommendedName>
        <fullName evidence="1">Replication restart protein PriB</fullName>
    </recommendedName>
</protein>